<comment type="tissue specificity">
    <text>Epidermis specific.</text>
</comment>
<comment type="domain">
    <text>Has a two-domain beta-structure, folded into four very similar Greek key motifs.</text>
</comment>
<comment type="similarity">
    <text evidence="2">Belongs to the beta/gamma-crystallin family.</text>
</comment>
<sequence>MNTITVYEHSNFQGLHKTFTSDVPNLVNESFNDCISSVKIVGQPWILHQDINYSGQCLPLEEGEYSGISMNDGASSLRLITDDLSNPQITVYEHVNGGGKALVLTEETNLAFGNMHDNISSHRVQRGAWALYEHINRGGRCIVARAGEYLANYCTIGFNDQVSHVYPLRAGKTSVTATILWDRKKVESERNVQIDQYFYTNNTSIEQQFTATSTKEFEKYVSHSFEFSNETSIKVGTSFTLKGVVDINTEVSNTFTVKKGETESFTTRKKAELSMPVKAPPRSKLTVNFMCKEITISVPVELKIVRGSKTDIETGTYRCESGTETYIDVQSLPIS</sequence>
<accession>P46058</accession>
<organism>
    <name type="scientific">Cynops pyrrhogaster</name>
    <name type="common">Japanese fire-bellied newt</name>
    <name type="synonym">Molge pyrrhogaster</name>
    <dbReference type="NCBI Taxonomy" id="8330"/>
    <lineage>
        <taxon>Eukaryota</taxon>
        <taxon>Metazoa</taxon>
        <taxon>Chordata</taxon>
        <taxon>Craniata</taxon>
        <taxon>Vertebrata</taxon>
        <taxon>Euteleostomi</taxon>
        <taxon>Amphibia</taxon>
        <taxon>Batrachia</taxon>
        <taxon>Caudata</taxon>
        <taxon>Salamandroidea</taxon>
        <taxon>Salamandridae</taxon>
        <taxon>Pleurodelinae</taxon>
        <taxon>Cynops</taxon>
    </lineage>
</organism>
<name>EDSP_CYNPY</name>
<proteinExistence type="evidence at transcript level"/>
<reference key="1">
    <citation type="journal article" date="1992" name="Dev. Growth Differ.">
        <title>Cloning of an epidermis-specific Cynops cDNA from neurula library.</title>
        <authorList>
            <person name="Takabatake T."/>
            <person name="Takeshima K."/>
            <person name="Takahashi T."/>
        </authorList>
    </citation>
    <scope>NUCLEOTIDE SEQUENCE [MRNA]</scope>
</reference>
<protein>
    <recommendedName>
        <fullName>Epidermal differentiation-specific protein</fullName>
    </recommendedName>
</protein>
<keyword id="KW-0677">Repeat</keyword>
<feature type="chain" id="PRO_0000057610" description="Epidermal differentiation-specific protein">
    <location>
        <begin position="1"/>
        <end position="335"/>
    </location>
</feature>
<feature type="domain" description="Beta/gamma crystallin 'Greek key' 1" evidence="1">
    <location>
        <begin position="2"/>
        <end position="42"/>
    </location>
</feature>
<feature type="domain" description="Beta/gamma crystallin 'Greek key' 2" evidence="1">
    <location>
        <begin position="43"/>
        <end position="81"/>
    </location>
</feature>
<feature type="domain" description="Beta/gamma crystallin 'Greek key' 3" evidence="1">
    <location>
        <begin position="87"/>
        <end position="126"/>
    </location>
</feature>
<feature type="domain" description="Beta/gamma crystallin 'Greek key' 4" evidence="1">
    <location>
        <begin position="127"/>
        <end position="169"/>
    </location>
</feature>
<dbReference type="EMBL" id="D11395">
    <property type="protein sequence ID" value="BAA01991.1"/>
    <property type="molecule type" value="mRNA"/>
</dbReference>
<dbReference type="SMR" id="P46058"/>
<dbReference type="TCDB" id="1.C.4.8.2">
    <property type="family name" value="the aerolysin channel-forming toxin (aerolysin) family"/>
</dbReference>
<dbReference type="GO" id="GO:0005212">
    <property type="term" value="F:structural constituent of eye lens"/>
    <property type="evidence" value="ECO:0007669"/>
    <property type="project" value="TreeGrafter"/>
</dbReference>
<dbReference type="GO" id="GO:0002088">
    <property type="term" value="P:lens development in camera-type eye"/>
    <property type="evidence" value="ECO:0007669"/>
    <property type="project" value="TreeGrafter"/>
</dbReference>
<dbReference type="GO" id="GO:0007601">
    <property type="term" value="P:visual perception"/>
    <property type="evidence" value="ECO:0007669"/>
    <property type="project" value="TreeGrafter"/>
</dbReference>
<dbReference type="CDD" id="cd20230">
    <property type="entry name" value="PFM_EP37-like"/>
    <property type="match status" value="1"/>
</dbReference>
<dbReference type="Gene3D" id="2.60.20.10">
    <property type="entry name" value="Crystallins"/>
    <property type="match status" value="2"/>
</dbReference>
<dbReference type="Gene3D" id="2.170.15.10">
    <property type="entry name" value="Proaerolysin, chain A, domain 3"/>
    <property type="match status" value="1"/>
</dbReference>
<dbReference type="InterPro" id="IPR004991">
    <property type="entry name" value="Aerolysin-like"/>
</dbReference>
<dbReference type="InterPro" id="IPR050252">
    <property type="entry name" value="Beta/Gamma-Crystallin"/>
</dbReference>
<dbReference type="InterPro" id="IPR001064">
    <property type="entry name" value="Beta/gamma_crystallin"/>
</dbReference>
<dbReference type="InterPro" id="IPR011024">
    <property type="entry name" value="G_crystallin-like"/>
</dbReference>
<dbReference type="PANTHER" id="PTHR11818">
    <property type="entry name" value="BETA/GAMMA CRYSTALLIN"/>
    <property type="match status" value="1"/>
</dbReference>
<dbReference type="PANTHER" id="PTHR11818:SF103">
    <property type="entry name" value="BETA_GAMMA CRYSTALLIN 'GREEK KEY' DOMAIN-CONTAINING PROTEIN"/>
    <property type="match status" value="1"/>
</dbReference>
<dbReference type="Pfam" id="PF00030">
    <property type="entry name" value="Crystall"/>
    <property type="match status" value="2"/>
</dbReference>
<dbReference type="Pfam" id="PF03318">
    <property type="entry name" value="ETX_MTX2"/>
    <property type="match status" value="1"/>
</dbReference>
<dbReference type="SMART" id="SM00247">
    <property type="entry name" value="XTALbg"/>
    <property type="match status" value="2"/>
</dbReference>
<dbReference type="SUPFAM" id="SSF56973">
    <property type="entry name" value="Aerolisin/ETX pore-forming domain"/>
    <property type="match status" value="1"/>
</dbReference>
<dbReference type="SUPFAM" id="SSF49695">
    <property type="entry name" value="gamma-Crystallin-like"/>
    <property type="match status" value="1"/>
</dbReference>
<dbReference type="PROSITE" id="PS50915">
    <property type="entry name" value="CRYSTALLIN_BETA_GAMMA"/>
    <property type="match status" value="4"/>
</dbReference>
<evidence type="ECO:0000255" key="1">
    <source>
        <dbReference type="PROSITE-ProRule" id="PRU00028"/>
    </source>
</evidence>
<evidence type="ECO:0000305" key="2"/>